<evidence type="ECO:0000250" key="1">
    <source>
        <dbReference type="UniProtKB" id="P56254"/>
    </source>
</evidence>
<evidence type="ECO:0000255" key="2">
    <source>
        <dbReference type="PROSITE-ProRule" id="PRU00395"/>
    </source>
</evidence>
<evidence type="ECO:0000269" key="3">
    <source>
    </source>
</evidence>
<evidence type="ECO:0000303" key="4">
    <source>
    </source>
</evidence>
<evidence type="ECO:0000305" key="5"/>
<evidence type="ECO:0000305" key="6">
    <source>
    </source>
</evidence>
<feature type="peptide" id="PRO_0000441783" description="Cyclotide psybry B" evidence="3">
    <location>
        <begin position="1"/>
        <end position="31"/>
    </location>
</feature>
<feature type="disulfide bond" evidence="2">
    <location>
        <begin position="5"/>
        <end position="20"/>
    </location>
</feature>
<feature type="disulfide bond" evidence="2">
    <location>
        <begin position="9"/>
        <end position="22"/>
    </location>
</feature>
<feature type="disulfide bond" evidence="1">
    <location>
        <begin position="15"/>
        <end position="28"/>
    </location>
</feature>
<feature type="cross-link" description="Cyclopeptide (Gly-Asn)" evidence="6">
    <location>
        <begin position="1"/>
        <end position="31"/>
    </location>
</feature>
<feature type="unsure residue" description="I or L" evidence="4">
    <location>
        <position position="24"/>
    </location>
</feature>
<feature type="unsure residue" description="I or L" evidence="4">
    <location>
        <position position="27"/>
    </location>
</feature>
<name>CYPBB_PSYBR</name>
<organism>
    <name type="scientific">Psychotria brachyceras</name>
    <dbReference type="NCBI Taxonomy" id="980682"/>
    <lineage>
        <taxon>Eukaryota</taxon>
        <taxon>Viridiplantae</taxon>
        <taxon>Streptophyta</taxon>
        <taxon>Embryophyta</taxon>
        <taxon>Tracheophyta</taxon>
        <taxon>Spermatophyta</taxon>
        <taxon>Magnoliopsida</taxon>
        <taxon>eudicotyledons</taxon>
        <taxon>Gunneridae</taxon>
        <taxon>Pentapetalae</taxon>
        <taxon>asterids</taxon>
        <taxon>lamiids</taxon>
        <taxon>Gentianales</taxon>
        <taxon>Rubiaceae</taxon>
        <taxon>Rubioideae</taxon>
        <taxon>Psychotrieae</taxon>
        <taxon>Psychotria</taxon>
    </lineage>
</organism>
<sequence length="31" mass="3298">GFNPCGETCWNKPTCHAPGCTCSIANICVRN</sequence>
<dbReference type="SMR" id="C0HL21"/>
<dbReference type="GO" id="GO:0006952">
    <property type="term" value="P:defense response"/>
    <property type="evidence" value="ECO:0007669"/>
    <property type="project" value="UniProtKB-KW"/>
</dbReference>
<dbReference type="InterPro" id="IPR005535">
    <property type="entry name" value="Cyclotide"/>
</dbReference>
<dbReference type="InterPro" id="IPR036146">
    <property type="entry name" value="Cyclotide_sf"/>
</dbReference>
<dbReference type="Pfam" id="PF03784">
    <property type="entry name" value="Cyclotide"/>
    <property type="match status" value="1"/>
</dbReference>
<dbReference type="SUPFAM" id="SSF57038">
    <property type="entry name" value="Cyclotides"/>
    <property type="match status" value="1"/>
</dbReference>
<comment type="function">
    <text evidence="2">Probably participates in a plant defense mechanism.</text>
</comment>
<comment type="domain">
    <text evidence="5">The presence of a 'disulfide through disulfide knot' structurally defines this protein as a knottin.</text>
</comment>
<comment type="PTM">
    <text evidence="2 3">This is a cyclic peptide.</text>
</comment>
<comment type="mass spectrometry" mass="3637.39" method="MALDI" evidence="3"/>
<comment type="similarity">
    <text evidence="2">Belongs to the cyclotide family.</text>
</comment>
<comment type="caution">
    <text evidence="2">This peptide is cyclic. The start position was chosen by similarity to Oak1 (kalata B1) for which the DNA sequence is known.</text>
</comment>
<keyword id="KW-0903">Direct protein sequencing</keyword>
<keyword id="KW-1015">Disulfide bond</keyword>
<keyword id="KW-0960">Knottin</keyword>
<keyword id="KW-0611">Plant defense</keyword>
<reference evidence="5" key="1">
    <citation type="journal article" date="2016" name="J. Nat. Prod.">
        <title>Isolation and Characterization of Cyclotides from Brazilian Psychotria: Significance in Plant Defense and Co-occurrence with Antioxidant Alkaloids.</title>
        <authorList>
            <person name="Matsuura H.N."/>
            <person name="Poth A.G."/>
            <person name="Yendo A.C."/>
            <person name="Fett-Neto A.G."/>
            <person name="Craik D.J."/>
        </authorList>
    </citation>
    <scope>PROTEIN SEQUENCE</scope>
    <scope>MASS SPECTROMETRY</scope>
    <scope>IDENTIFICATION BY MASS SPECTROMETRY</scope>
    <scope>CYCLIZATION</scope>
    <source>
        <tissue evidence="4">Leaf</tissue>
    </source>
</reference>
<protein>
    <recommendedName>
        <fullName evidence="4">Cyclotide psybry B</fullName>
    </recommendedName>
</protein>
<accession>C0HL21</accession>
<proteinExistence type="evidence at protein level"/>